<reference key="1">
    <citation type="journal article" date="2008" name="Infect. Immun.">
        <title>Genome of Mycoplasma arthritidis.</title>
        <authorList>
            <person name="Dybvig K."/>
            <person name="Zuhua C."/>
            <person name="Lao P."/>
            <person name="Jordan D.S."/>
            <person name="French C.T."/>
            <person name="Tu A.H."/>
            <person name="Loraine A.E."/>
        </authorList>
    </citation>
    <scope>NUCLEOTIDE SEQUENCE [LARGE SCALE GENOMIC DNA]</scope>
    <source>
        <strain>158L3-1</strain>
    </source>
</reference>
<proteinExistence type="inferred from homology"/>
<protein>
    <recommendedName>
        <fullName evidence="1">DNA gyrase subunit A</fullName>
        <ecNumber evidence="1">5.6.2.2</ecNumber>
    </recommendedName>
</protein>
<evidence type="ECO:0000255" key="1">
    <source>
        <dbReference type="HAMAP-Rule" id="MF_01897"/>
    </source>
</evidence>
<evidence type="ECO:0000255" key="2">
    <source>
        <dbReference type="PROSITE-ProRule" id="PRU01384"/>
    </source>
</evidence>
<evidence type="ECO:0000256" key="3">
    <source>
        <dbReference type="SAM" id="MobiDB-lite"/>
    </source>
</evidence>
<feature type="chain" id="PRO_0000409829" description="DNA gyrase subunit A">
    <location>
        <begin position="1"/>
        <end position="898"/>
    </location>
</feature>
<feature type="domain" description="Topo IIA-type catalytic" evidence="2">
    <location>
        <begin position="97"/>
        <end position="562"/>
    </location>
</feature>
<feature type="region of interest" description="Disordered" evidence="3">
    <location>
        <begin position="1"/>
        <end position="22"/>
    </location>
</feature>
<feature type="region of interest" description="Disordered" evidence="3">
    <location>
        <begin position="36"/>
        <end position="56"/>
    </location>
</feature>
<feature type="short sequence motif" description="GyrA-box" evidence="1">
    <location>
        <begin position="589"/>
        <end position="595"/>
    </location>
</feature>
<feature type="active site" description="O-(5'-phospho-DNA)-tyrosine intermediate" evidence="1">
    <location>
        <position position="185"/>
    </location>
</feature>
<name>GYRA_META1</name>
<sequence>MSDDKKDEEKLKKSDENFDDDSKYYEFDDTIKKVFEEEKAKEEDEDEEEIPQEKEGYQVKSQLLETEQNGLQPADLAKVMKSSFIEYAMSVIVSRALPDARDGLKPVHRRILYGMSELGMFHTAPHKKSARIVGDVLGKYHPHGDSSVYEAMVRMAQDFSLRYPLIDGHGNFGSIDGDEAAAMRYTEARMSKIAGVMVDGIKKNTVDFIDNYDGTEKEPTVLPSRFPNLLVSGTSGIAVGMATNIPPHNLGEIIDAVCALAKNPEITIDGLMEFVLAPDFPTGATIFNKAGLIEAYKTGRGSITMRAKANIQELANGKSKIIITEIPYEVKKTEIMEKIADHLKNKRIEGISDFRDESNRDGIRVVIDVKKNAVPEVILNTLYKLTRLQTNFSFNMIALVNGEPKLLNLKECLQVYLDHQIDVTRRRLQFDLEKDLARAHILEGLKICVENIDRVIEIIKKSKTDVDAQAKLCQTFSLSEIQAKAIVDMRLGRLTGLAIEKMNDELDQVNARIAEYRAILSSHEKLIELIIKELQEVKEAYGDKRRSEIRWDVMSSINNEDLIPQKEIVITLSSNNYIKRIDLEEYREQRRGGVGVSTVKTYQDDDIQDVVVANTHADLLIFTDEAKIYRVRGHEIPSGTKQSKGTPIVNIVPTIQKNEKVVKIICVTDYEESQSLITVTERGVIKKTNLKEYELIRKNGKYALSLLEDDHLIDVRVVDQDEEIFIAASNSRINRFNVADVREMGRVARGVGGIRLSDDDKVVSVSSSKDGAYIFSLGAKGYGKLSLVESYRKTKRNAKGVITLNEDKAGKLVYAAAVHGVEDLIIMTQSGIAIRISLRDINVIGRNAKGVKIINLKGRSDQIVGVAKIYDEDATDRELTKEEYIEVTKEIDIDLANE</sequence>
<organism>
    <name type="scientific">Metamycoplasma arthritidis (strain 158L3-1)</name>
    <name type="common">Mycoplasma arthritidis</name>
    <dbReference type="NCBI Taxonomy" id="243272"/>
    <lineage>
        <taxon>Bacteria</taxon>
        <taxon>Bacillati</taxon>
        <taxon>Mycoplasmatota</taxon>
        <taxon>Mycoplasmoidales</taxon>
        <taxon>Metamycoplasmataceae</taxon>
        <taxon>Metamycoplasma</taxon>
    </lineage>
</organism>
<comment type="function">
    <text evidence="1">A type II topoisomerase that negatively supercoils closed circular double-stranded (ds) DNA in an ATP-dependent manner to modulate DNA topology and maintain chromosomes in an underwound state. Negative supercoiling favors strand separation, and DNA replication, transcription, recombination and repair, all of which involve strand separation. Also able to catalyze the interconversion of other topological isomers of dsDNA rings, including catenanes and knotted rings. Type II topoisomerases break and join 2 DNA strands simultaneously in an ATP-dependent manner.</text>
</comment>
<comment type="catalytic activity">
    <reaction evidence="1">
        <text>ATP-dependent breakage, passage and rejoining of double-stranded DNA.</text>
        <dbReference type="EC" id="5.6.2.2"/>
    </reaction>
</comment>
<comment type="subunit">
    <text evidence="1">Heterotetramer, composed of two GyrA and two GyrB chains. In the heterotetramer, GyrA contains the active site tyrosine that forms a transient covalent intermediate with DNA, while GyrB binds cofactors and catalyzes ATP hydrolysis.</text>
</comment>
<comment type="subcellular location">
    <subcellularLocation>
        <location evidence="1">Cytoplasm</location>
    </subcellularLocation>
</comment>
<comment type="miscellaneous">
    <text evidence="1">Few gyrases are as efficient as E.coli at forming negative supercoils. Not all organisms have 2 type II topoisomerases; in organisms with a single type II topoisomerase this enzyme also has to decatenate newly replicated chromosomes.</text>
</comment>
<comment type="similarity">
    <text evidence="1">Belongs to the type II topoisomerase GyrA/ParC subunit family.</text>
</comment>
<keyword id="KW-0067">ATP-binding</keyword>
<keyword id="KW-0963">Cytoplasm</keyword>
<keyword id="KW-0238">DNA-binding</keyword>
<keyword id="KW-0413">Isomerase</keyword>
<keyword id="KW-0547">Nucleotide-binding</keyword>
<keyword id="KW-1185">Reference proteome</keyword>
<keyword id="KW-0799">Topoisomerase</keyword>
<accession>B3PN30</accession>
<dbReference type="EC" id="5.6.2.2" evidence="1"/>
<dbReference type="EMBL" id="CP001047">
    <property type="protein sequence ID" value="ACF07432.1"/>
    <property type="molecule type" value="Genomic_DNA"/>
</dbReference>
<dbReference type="RefSeq" id="WP_012498389.1">
    <property type="nucleotide sequence ID" value="NC_011025.1"/>
</dbReference>
<dbReference type="SMR" id="B3PN30"/>
<dbReference type="STRING" id="243272.MARTH_orf662"/>
<dbReference type="KEGG" id="mat:MARTH_orf662"/>
<dbReference type="eggNOG" id="COG0188">
    <property type="taxonomic scope" value="Bacteria"/>
</dbReference>
<dbReference type="HOGENOM" id="CLU_002977_6_1_14"/>
<dbReference type="Proteomes" id="UP000008812">
    <property type="component" value="Chromosome"/>
</dbReference>
<dbReference type="GO" id="GO:0005694">
    <property type="term" value="C:chromosome"/>
    <property type="evidence" value="ECO:0007669"/>
    <property type="project" value="InterPro"/>
</dbReference>
<dbReference type="GO" id="GO:0005737">
    <property type="term" value="C:cytoplasm"/>
    <property type="evidence" value="ECO:0007669"/>
    <property type="project" value="UniProtKB-SubCell"/>
</dbReference>
<dbReference type="GO" id="GO:0009330">
    <property type="term" value="C:DNA topoisomerase type II (double strand cut, ATP-hydrolyzing) complex"/>
    <property type="evidence" value="ECO:0007669"/>
    <property type="project" value="TreeGrafter"/>
</dbReference>
<dbReference type="GO" id="GO:0005524">
    <property type="term" value="F:ATP binding"/>
    <property type="evidence" value="ECO:0007669"/>
    <property type="project" value="UniProtKB-UniRule"/>
</dbReference>
<dbReference type="GO" id="GO:0003677">
    <property type="term" value="F:DNA binding"/>
    <property type="evidence" value="ECO:0007669"/>
    <property type="project" value="UniProtKB-UniRule"/>
</dbReference>
<dbReference type="GO" id="GO:0034335">
    <property type="term" value="F:DNA negative supercoiling activity"/>
    <property type="evidence" value="ECO:0007669"/>
    <property type="project" value="UniProtKB-ARBA"/>
</dbReference>
<dbReference type="GO" id="GO:0006265">
    <property type="term" value="P:DNA topological change"/>
    <property type="evidence" value="ECO:0007669"/>
    <property type="project" value="UniProtKB-UniRule"/>
</dbReference>
<dbReference type="GO" id="GO:0006261">
    <property type="term" value="P:DNA-templated DNA replication"/>
    <property type="evidence" value="ECO:0007669"/>
    <property type="project" value="UniProtKB-UniRule"/>
</dbReference>
<dbReference type="CDD" id="cd00187">
    <property type="entry name" value="TOP4c"/>
    <property type="match status" value="1"/>
</dbReference>
<dbReference type="FunFam" id="1.10.268.10:FF:000001">
    <property type="entry name" value="DNA gyrase subunit A"/>
    <property type="match status" value="1"/>
</dbReference>
<dbReference type="FunFam" id="3.30.1360.40:FF:000002">
    <property type="entry name" value="DNA gyrase subunit A"/>
    <property type="match status" value="1"/>
</dbReference>
<dbReference type="FunFam" id="3.90.199.10:FF:000001">
    <property type="entry name" value="DNA gyrase subunit A"/>
    <property type="match status" value="1"/>
</dbReference>
<dbReference type="Gene3D" id="3.30.1360.40">
    <property type="match status" value="1"/>
</dbReference>
<dbReference type="Gene3D" id="2.120.10.90">
    <property type="entry name" value="DNA gyrase/topoisomerase IV, subunit A, C-terminal"/>
    <property type="match status" value="1"/>
</dbReference>
<dbReference type="Gene3D" id="3.90.199.10">
    <property type="entry name" value="Topoisomerase II, domain 5"/>
    <property type="match status" value="1"/>
</dbReference>
<dbReference type="Gene3D" id="1.10.268.10">
    <property type="entry name" value="Topoisomerase, domain 3"/>
    <property type="match status" value="1"/>
</dbReference>
<dbReference type="HAMAP" id="MF_01897">
    <property type="entry name" value="GyrA"/>
    <property type="match status" value="1"/>
</dbReference>
<dbReference type="InterPro" id="IPR005743">
    <property type="entry name" value="GyrA"/>
</dbReference>
<dbReference type="InterPro" id="IPR006691">
    <property type="entry name" value="GyrA/parC_rep"/>
</dbReference>
<dbReference type="InterPro" id="IPR035516">
    <property type="entry name" value="Gyrase/topoIV_suA_C"/>
</dbReference>
<dbReference type="InterPro" id="IPR013760">
    <property type="entry name" value="Topo_IIA-like_dom_sf"/>
</dbReference>
<dbReference type="InterPro" id="IPR013758">
    <property type="entry name" value="Topo_IIA_A/C_ab"/>
</dbReference>
<dbReference type="InterPro" id="IPR013757">
    <property type="entry name" value="Topo_IIA_A_a_sf"/>
</dbReference>
<dbReference type="InterPro" id="IPR002205">
    <property type="entry name" value="Topo_IIA_dom_A"/>
</dbReference>
<dbReference type="InterPro" id="IPR050220">
    <property type="entry name" value="Type_II_DNA_Topoisomerases"/>
</dbReference>
<dbReference type="NCBIfam" id="TIGR01063">
    <property type="entry name" value="gyrA"/>
    <property type="match status" value="1"/>
</dbReference>
<dbReference type="NCBIfam" id="NF004043">
    <property type="entry name" value="PRK05560.1"/>
    <property type="match status" value="1"/>
</dbReference>
<dbReference type="NCBIfam" id="NF004044">
    <property type="entry name" value="PRK05561.1"/>
    <property type="match status" value="1"/>
</dbReference>
<dbReference type="PANTHER" id="PTHR43493:SF5">
    <property type="entry name" value="DNA GYRASE SUBUNIT A, CHLOROPLASTIC_MITOCHONDRIAL"/>
    <property type="match status" value="1"/>
</dbReference>
<dbReference type="PANTHER" id="PTHR43493">
    <property type="entry name" value="DNA GYRASE/TOPOISOMERASE SUBUNIT A"/>
    <property type="match status" value="1"/>
</dbReference>
<dbReference type="Pfam" id="PF03989">
    <property type="entry name" value="DNA_gyraseA_C"/>
    <property type="match status" value="6"/>
</dbReference>
<dbReference type="Pfam" id="PF00521">
    <property type="entry name" value="DNA_topoisoIV"/>
    <property type="match status" value="1"/>
</dbReference>
<dbReference type="SMART" id="SM00434">
    <property type="entry name" value="TOP4c"/>
    <property type="match status" value="1"/>
</dbReference>
<dbReference type="SUPFAM" id="SSF101904">
    <property type="entry name" value="GyrA/ParC C-terminal domain-like"/>
    <property type="match status" value="1"/>
</dbReference>
<dbReference type="SUPFAM" id="SSF56719">
    <property type="entry name" value="Type II DNA topoisomerase"/>
    <property type="match status" value="1"/>
</dbReference>
<dbReference type="PROSITE" id="PS52040">
    <property type="entry name" value="TOPO_IIA"/>
    <property type="match status" value="1"/>
</dbReference>
<gene>
    <name evidence="1" type="primary">gyrA</name>
    <name type="ordered locus">MARTH_orf662</name>
</gene>